<feature type="chain" id="PRO_0000377781" description="Putative SWIB domain-containing protein 070L">
    <location>
        <begin position="1"/>
        <end position="282"/>
    </location>
</feature>
<feature type="domain" description="SWIB/MDM2" evidence="1">
    <location>
        <begin position="97"/>
        <end position="181"/>
    </location>
</feature>
<feature type="region of interest" description="Disordered" evidence="2">
    <location>
        <begin position="1"/>
        <end position="21"/>
    </location>
</feature>
<feature type="region of interest" description="Disordered" evidence="2">
    <location>
        <begin position="199"/>
        <end position="282"/>
    </location>
</feature>
<feature type="compositionally biased region" description="Low complexity" evidence="2">
    <location>
        <begin position="1"/>
        <end position="16"/>
    </location>
</feature>
<feature type="compositionally biased region" description="Basic and acidic residues" evidence="2">
    <location>
        <begin position="262"/>
        <end position="275"/>
    </location>
</feature>
<organism>
    <name type="scientific">Invertebrate iridescent virus 3</name>
    <name type="common">IIV-3</name>
    <name type="synonym">Mosquito iridescent virus</name>
    <dbReference type="NCBI Taxonomy" id="345201"/>
    <lineage>
        <taxon>Viruses</taxon>
        <taxon>Varidnaviria</taxon>
        <taxon>Bamfordvirae</taxon>
        <taxon>Nucleocytoviricota</taxon>
        <taxon>Megaviricetes</taxon>
        <taxon>Pimascovirales</taxon>
        <taxon>Iridoviridae</taxon>
        <taxon>Betairidovirinae</taxon>
        <taxon>Chloriridovirus</taxon>
    </lineage>
</organism>
<protein>
    <recommendedName>
        <fullName>Putative SWIB domain-containing protein 070L</fullName>
    </recommendedName>
</protein>
<organismHost>
    <name type="scientific">Aedes vexans</name>
    <name type="common">Inland floodwater mosquito</name>
    <name type="synonym">Culex vexans</name>
    <dbReference type="NCBI Taxonomy" id="7163"/>
</organismHost>
<organismHost>
    <name type="scientific">Culex territans</name>
    <dbReference type="NCBI Taxonomy" id="42431"/>
</organismHost>
<organismHost>
    <name type="scientific">Culiseta annulata</name>
    <dbReference type="NCBI Taxonomy" id="332058"/>
</organismHost>
<organismHost>
    <name type="scientific">Ochlerotatus sollicitans</name>
    <name type="common">eastern saltmarsh mosquito</name>
    <dbReference type="NCBI Taxonomy" id="310513"/>
</organismHost>
<organismHost>
    <name type="scientific">Ochlerotatus taeniorhynchus</name>
    <name type="common">Black salt marsh mosquito</name>
    <name type="synonym">Aedes taeniorhynchus</name>
    <dbReference type="NCBI Taxonomy" id="329105"/>
</organismHost>
<organismHost>
    <name type="scientific">Psorophora ferox</name>
    <dbReference type="NCBI Taxonomy" id="7183"/>
</organismHost>
<evidence type="ECO:0000255" key="1">
    <source>
        <dbReference type="PROSITE-ProRule" id="PRU01273"/>
    </source>
</evidence>
<evidence type="ECO:0000256" key="2">
    <source>
        <dbReference type="SAM" id="MobiDB-lite"/>
    </source>
</evidence>
<evidence type="ECO:0000305" key="3"/>
<keyword id="KW-1185">Reference proteome</keyword>
<name>VF306_IIV3</name>
<proteinExistence type="inferred from homology"/>
<comment type="similarity">
    <text evidence="3">Belongs to the IIV-6 306R family.</text>
</comment>
<reference key="1">
    <citation type="journal article" date="2006" name="J. Virol.">
        <title>Genome of invertebrate iridescent virus type 3 (mosquito iridescent virus).</title>
        <authorList>
            <person name="Delhon G."/>
            <person name="Tulman E.R."/>
            <person name="Afonso C.L."/>
            <person name="Lu Z."/>
            <person name="Becnel J.J."/>
            <person name="Moser B.A."/>
            <person name="Kutish G.F."/>
            <person name="Rock D.L."/>
        </authorList>
    </citation>
    <scope>NUCLEOTIDE SEQUENCE [LARGE SCALE GENOMIC DNA]</scope>
</reference>
<dbReference type="EMBL" id="DQ643392">
    <property type="protein sequence ID" value="ABF82100.1"/>
    <property type="molecule type" value="Genomic_DNA"/>
</dbReference>
<dbReference type="RefSeq" id="YP_654642.1">
    <property type="nucleotide sequence ID" value="NC_008187.1"/>
</dbReference>
<dbReference type="KEGG" id="vg:4156281"/>
<dbReference type="OrthoDB" id="13936at10239"/>
<dbReference type="Proteomes" id="UP000001358">
    <property type="component" value="Genome"/>
</dbReference>
<dbReference type="CDD" id="cd10567">
    <property type="entry name" value="SWIB-MDM2_like"/>
    <property type="match status" value="1"/>
</dbReference>
<dbReference type="Gene3D" id="1.10.245.10">
    <property type="entry name" value="SWIB/MDM2 domain"/>
    <property type="match status" value="1"/>
</dbReference>
<dbReference type="InterPro" id="IPR019835">
    <property type="entry name" value="SWIB_domain"/>
</dbReference>
<dbReference type="InterPro" id="IPR036885">
    <property type="entry name" value="SWIB_MDM2_dom_sf"/>
</dbReference>
<dbReference type="InterPro" id="IPR003121">
    <property type="entry name" value="SWIB_MDM2_domain"/>
</dbReference>
<dbReference type="PANTHER" id="PTHR13844">
    <property type="entry name" value="SWI/SNF-RELATED MATRIX-ASSOCIATED ACTIN-DEPENDENT REGULATOR OF CHROMATIN SUBFAMILY D"/>
    <property type="match status" value="1"/>
</dbReference>
<dbReference type="Pfam" id="PF02201">
    <property type="entry name" value="SWIB"/>
    <property type="match status" value="1"/>
</dbReference>
<dbReference type="SMART" id="SM00151">
    <property type="entry name" value="SWIB"/>
    <property type="match status" value="1"/>
</dbReference>
<dbReference type="SUPFAM" id="SSF47592">
    <property type="entry name" value="SWIB/MDM2 domain"/>
    <property type="match status" value="1"/>
</dbReference>
<dbReference type="PROSITE" id="PS51925">
    <property type="entry name" value="SWIB_MDM2"/>
    <property type="match status" value="1"/>
</dbReference>
<sequence>MFQTTPKQVKPTTVPKTGRKNADVAHEHFTNGTQKLEEALLKFEAILKPKEKDQSIQEFRKQVRAVCKDAKDAKKFLEKYKNIRYRPKRTRESHNTGLEKPRMISEAMATFADWEYGKTEKSRYDVTKYLCAYIKDNDLRDASNKTIILPDAKLKKLLQVDDSVVLKYPTMQKYLKHCFDEVVARAPSPTTELGAAELTDDQTTAEEAPKEVKKSRKPKEVAVPQPPPEEEEVAPVEQQQQSVESEEEELQLPPPKPKKSTGKKDKENIPLEKVKKEHKIKK</sequence>
<accession>Q196Z0</accession>
<gene>
    <name type="ORF">IIV3-070L</name>
</gene>